<reference key="1">
    <citation type="journal article" date="2000" name="J. Bacteriol.">
        <title>Gene rearrangements in the vsa locus of Mycoplasma pulmonis.</title>
        <authorList>
            <person name="Shen X."/>
            <person name="Gumulak J."/>
            <person name="Yu H."/>
            <person name="French C.T."/>
            <person name="Zou N."/>
            <person name="Dybvig K."/>
        </authorList>
    </citation>
    <scope>NUCLEOTIDE SEQUENCE [GENOMIC DNA]</scope>
    <source>
        <strain>KD735-15</strain>
    </source>
</reference>
<reference key="2">
    <citation type="journal article" date="2001" name="Nucleic Acids Res.">
        <title>The complete genome sequence of the murine respiratory pathogen Mycoplasma pulmonis.</title>
        <authorList>
            <person name="Chambaud I."/>
            <person name="Heilig R."/>
            <person name="Ferris S."/>
            <person name="Barbe V."/>
            <person name="Samson D."/>
            <person name="Galisson F."/>
            <person name="Moszer I."/>
            <person name="Dybvig K."/>
            <person name="Wroblewski H."/>
            <person name="Viari A."/>
            <person name="Rocha E.P.C."/>
            <person name="Blanchard A."/>
        </authorList>
    </citation>
    <scope>NUCLEOTIDE SEQUENCE [LARGE SCALE GENOMIC DNA]</scope>
    <source>
        <strain>UAB CTIP</strain>
    </source>
</reference>
<reference key="3">
    <citation type="journal article" date="1995" name="Mol. Microbiol.">
        <title>Mechanism of antigenic variation in Mycoplasma pulmonis: interwoven, site-specific DNA inversions.</title>
        <authorList>
            <person name="Bhugra B."/>
            <person name="Voelker L.L."/>
            <person name="Zou N."/>
            <person name="Yu H."/>
            <person name="Dybvig K."/>
        </authorList>
    </citation>
    <scope>PARTIAL NUCLEOTIDE SEQUENCE [GENOMIC DNA]</scope>
    <source>
        <strain>KD735-15</strain>
    </source>
</reference>
<feature type="signal peptide" evidence="1">
    <location>
        <begin position="1"/>
        <end position="27"/>
    </location>
</feature>
<feature type="chain" id="PRO_0000018235" description="Lipoprotein A">
    <location>
        <begin position="28"/>
        <end position="578"/>
    </location>
</feature>
<feature type="region of interest" description="Disordered" evidence="2">
    <location>
        <begin position="35"/>
        <end position="135"/>
    </location>
</feature>
<feature type="region of interest" description="Disordered" evidence="2">
    <location>
        <begin position="172"/>
        <end position="203"/>
    </location>
</feature>
<feature type="compositionally biased region" description="Polar residues" evidence="2">
    <location>
        <begin position="41"/>
        <end position="50"/>
    </location>
</feature>
<feature type="compositionally biased region" description="Basic and acidic residues" evidence="2">
    <location>
        <begin position="51"/>
        <end position="74"/>
    </location>
</feature>
<feature type="compositionally biased region" description="Polar residues" evidence="2">
    <location>
        <begin position="75"/>
        <end position="96"/>
    </location>
</feature>
<feature type="compositionally biased region" description="Low complexity" evidence="2">
    <location>
        <begin position="108"/>
        <end position="119"/>
    </location>
</feature>
<feature type="compositionally biased region" description="Basic and acidic residues" evidence="2">
    <location>
        <begin position="172"/>
        <end position="181"/>
    </location>
</feature>
<feature type="lipid moiety-binding region" description="N-palmitoyl cysteine" evidence="1">
    <location>
        <position position="28"/>
    </location>
</feature>
<feature type="lipid moiety-binding region" description="S-diacylglycerol cysteine" evidence="1">
    <location>
        <position position="28"/>
    </location>
</feature>
<feature type="sequence variant" description="In strain: KD735-15.">
    <original>K</original>
    <variation>R</variation>
    <location>
        <position position="7"/>
    </location>
</feature>
<feature type="sequence variant" description="In strain: KD735-15.">
    <original>N</original>
    <variation>S</variation>
    <location>
        <position position="41"/>
    </location>
</feature>
<feature type="sequence variant" description="In strain: KD735-15.">
    <original>N</original>
    <variation>D</variation>
    <location>
        <position position="110"/>
    </location>
</feature>
<feature type="sequence variant" description="In strain: KD735-15.">
    <original>S</original>
    <variation>A</variation>
    <location>
        <position position="127"/>
    </location>
</feature>
<feature type="sequence variant" description="In strain: KD735-15.">
    <original>Y</original>
    <variation>N</variation>
    <location>
        <position position="547"/>
    </location>
</feature>
<protein>
    <recommendedName>
        <fullName>Lipoprotein A</fullName>
    </recommendedName>
</protein>
<keyword id="KW-1003">Cell membrane</keyword>
<keyword id="KW-0449">Lipoprotein</keyword>
<keyword id="KW-0472">Membrane</keyword>
<keyword id="KW-0564">Palmitate</keyword>
<keyword id="KW-1185">Reference proteome</keyword>
<keyword id="KW-0732">Signal</keyword>
<name>LIPA_MYCPU</name>
<organism>
    <name type="scientific">Mycoplasmopsis pulmonis (strain UAB CTIP)</name>
    <name type="common">Mycoplasma pulmonis</name>
    <dbReference type="NCBI Taxonomy" id="272635"/>
    <lineage>
        <taxon>Bacteria</taxon>
        <taxon>Bacillati</taxon>
        <taxon>Mycoplasmatota</taxon>
        <taxon>Mycoplasmoidales</taxon>
        <taxon>Metamycoplasmataceae</taxon>
        <taxon>Mycoplasmopsis</taxon>
    </lineage>
</organism>
<evidence type="ECO:0000255" key="1">
    <source>
        <dbReference type="PROSITE-ProRule" id="PRU00303"/>
    </source>
</evidence>
<evidence type="ECO:0000256" key="2">
    <source>
        <dbReference type="SAM" id="MobiDB-lite"/>
    </source>
</evidence>
<evidence type="ECO:0000305" key="3"/>
<gene>
    <name type="primary">lipA</name>
    <name type="ordered locus">MYPU_5300</name>
</gene>
<dbReference type="EMBL" id="U23947">
    <property type="protein sequence ID" value="AAB41030.2"/>
    <property type="molecule type" value="Genomic_DNA"/>
</dbReference>
<dbReference type="EMBL" id="AL445565">
    <property type="protein sequence ID" value="CAC13703.1"/>
    <property type="molecule type" value="Genomic_DNA"/>
</dbReference>
<dbReference type="PIR" id="B90578">
    <property type="entry name" value="B90578"/>
</dbReference>
<dbReference type="RefSeq" id="WP_010925331.1">
    <property type="nucleotide sequence ID" value="NC_002771.1"/>
</dbReference>
<dbReference type="KEGG" id="mpu:MYPU_5300"/>
<dbReference type="HOGENOM" id="CLU_020409_1_0_14"/>
<dbReference type="BioCyc" id="MPUL272635:G1GT6-538-MONOMER"/>
<dbReference type="Proteomes" id="UP000000528">
    <property type="component" value="Chromosome"/>
</dbReference>
<dbReference type="GO" id="GO:0005886">
    <property type="term" value="C:plasma membrane"/>
    <property type="evidence" value="ECO:0007669"/>
    <property type="project" value="UniProtKB-SubCell"/>
</dbReference>
<dbReference type="InterPro" id="IPR007326">
    <property type="entry name" value="Lipoprotein-assoc_dom"/>
</dbReference>
<dbReference type="Pfam" id="PF04200">
    <property type="entry name" value="Lipoprotein_17"/>
    <property type="match status" value="1"/>
</dbReference>
<dbReference type="PROSITE" id="PS51257">
    <property type="entry name" value="PROKAR_LIPOPROTEIN"/>
    <property type="match status" value="1"/>
</dbReference>
<comment type="subcellular location">
    <subcellularLocation>
        <location evidence="1">Cell membrane</location>
        <topology evidence="1">Lipid-anchor</topology>
    </subcellularLocation>
</comment>
<comment type="similarity">
    <text evidence="3">Belongs to the M.pulmonis LipAB lipoprotein family.</text>
</comment>
<accession>Q50274</accession>
<accession>Q98Q39</accession>
<proteinExistence type="inferred from homology"/>
<sequence>MNKKYFKKYSWVLILSTSILAPMTLASCNHNVAKKEDKTQNDSSNLSNKTNKSDPNDHLKDKDKNVSQDNKDSTNKAVSNENSQTQSQKTNESSQNTKDDSSKTSNLITNQNSSSNTKSKIQENKQSQKDQNTSAVNVSALEKQTKNDENISLVNSKDTNVILKNDEKVALAKDDSKEKSKNSSNLNLKTPVENRQNKNEVKDDKKALQWWQKLNESASILESFSYDQTSLSLTFKEGMPLGLEVVLKLENLDSHEEKEISFKTTNGKVQNVLLTSSNLTSGKWKIKSFSFDKTYSHSPTIETTFDFKTNEKLKQERIEKIQKAIDKYQIKIKQNYKDKPLISKYALSNFDLNLNFKDLEIVNNSLKFDGSNLNQDLKSEKQMKITFEKVSENQANKTRKAHFKITTLDNLVFEKTLEWSYKTNKEYLDEFKNGSALWDDLQASLTSVFEKSLWHPYQLPKAKSKINTINLINDVSASFQGYDYLDDFNGSAKLKFKLQRGQEQRDITFTINGFLKVSLIDPLYKGNLRNSEFDVKASSNGYWLGQYYTAAEVFKHYSNGKSYWYATANDGNPWLEFS</sequence>